<keyword id="KW-0067">ATP-binding</keyword>
<keyword id="KW-0378">Hydrolase</keyword>
<keyword id="KW-0460">Magnesium</keyword>
<keyword id="KW-0479">Metal-binding</keyword>
<keyword id="KW-0511">Multifunctional enzyme</keyword>
<keyword id="KW-0533">Nickel</keyword>
<keyword id="KW-0547">Nucleotide-binding</keyword>
<keyword id="KW-0548">Nucleotidyltransferase</keyword>
<keyword id="KW-0692">RNA repair</keyword>
<keyword id="KW-0694">RNA-binding</keyword>
<keyword id="KW-0808">Transferase</keyword>
<keyword id="KW-0819">tRNA processing</keyword>
<accession>Q0AIP2</accession>
<organism>
    <name type="scientific">Nitrosomonas eutropha (strain DSM 101675 / C91 / Nm57)</name>
    <dbReference type="NCBI Taxonomy" id="335283"/>
    <lineage>
        <taxon>Bacteria</taxon>
        <taxon>Pseudomonadati</taxon>
        <taxon>Pseudomonadota</taxon>
        <taxon>Betaproteobacteria</taxon>
        <taxon>Nitrosomonadales</taxon>
        <taxon>Nitrosomonadaceae</taxon>
        <taxon>Nitrosomonas</taxon>
    </lineage>
</organism>
<comment type="function">
    <text evidence="1">Catalyzes the addition and repair of the essential 3'-terminal CCA sequence in tRNAs without using a nucleic acid template. Adds these three nucleotides in the order of C, C, and A to the tRNA nucleotide-73, using CTP and ATP as substrates and producing inorganic pyrophosphate. tRNA 3'-terminal CCA addition is required both for tRNA processing and repair. Also involved in tRNA surveillance by mediating tandem CCA addition to generate a CCACCA at the 3' terminus of unstable tRNAs. While stable tRNAs receive only 3'-terminal CCA, unstable tRNAs are marked with CCACCA and rapidly degraded.</text>
</comment>
<comment type="catalytic activity">
    <reaction evidence="1">
        <text>a tRNA precursor + 2 CTP + ATP = a tRNA with a 3' CCA end + 3 diphosphate</text>
        <dbReference type="Rhea" id="RHEA:14433"/>
        <dbReference type="Rhea" id="RHEA-COMP:10465"/>
        <dbReference type="Rhea" id="RHEA-COMP:10468"/>
        <dbReference type="ChEBI" id="CHEBI:30616"/>
        <dbReference type="ChEBI" id="CHEBI:33019"/>
        <dbReference type="ChEBI" id="CHEBI:37563"/>
        <dbReference type="ChEBI" id="CHEBI:74896"/>
        <dbReference type="ChEBI" id="CHEBI:83071"/>
        <dbReference type="EC" id="2.7.7.72"/>
    </reaction>
</comment>
<comment type="catalytic activity">
    <reaction evidence="1">
        <text>a tRNA with a 3' CCA end + 2 CTP + ATP = a tRNA with a 3' CCACCA end + 3 diphosphate</text>
        <dbReference type="Rhea" id="RHEA:76235"/>
        <dbReference type="Rhea" id="RHEA-COMP:10468"/>
        <dbReference type="Rhea" id="RHEA-COMP:18655"/>
        <dbReference type="ChEBI" id="CHEBI:30616"/>
        <dbReference type="ChEBI" id="CHEBI:33019"/>
        <dbReference type="ChEBI" id="CHEBI:37563"/>
        <dbReference type="ChEBI" id="CHEBI:83071"/>
        <dbReference type="ChEBI" id="CHEBI:195187"/>
    </reaction>
    <physiologicalReaction direction="left-to-right" evidence="1">
        <dbReference type="Rhea" id="RHEA:76236"/>
    </physiologicalReaction>
</comment>
<comment type="cofactor">
    <cofactor evidence="1">
        <name>Mg(2+)</name>
        <dbReference type="ChEBI" id="CHEBI:18420"/>
    </cofactor>
    <text evidence="1">Magnesium is required for nucleotidyltransferase activity.</text>
</comment>
<comment type="cofactor">
    <cofactor evidence="1">
        <name>Ni(2+)</name>
        <dbReference type="ChEBI" id="CHEBI:49786"/>
    </cofactor>
    <text evidence="1">Nickel for phosphatase activity.</text>
</comment>
<comment type="subunit">
    <text evidence="1">Monomer. Can also form homodimers and oligomers.</text>
</comment>
<comment type="domain">
    <text evidence="1">Comprises two domains: an N-terminal domain containing the nucleotidyltransferase activity and a C-terminal HD domain associated with both phosphodiesterase and phosphatase activities.</text>
</comment>
<comment type="miscellaneous">
    <text evidence="1">A single active site specifically recognizes both ATP and CTP and is responsible for their addition.</text>
</comment>
<comment type="similarity">
    <text evidence="1">Belongs to the tRNA nucleotidyltransferase/poly(A) polymerase family. Bacterial CCA-adding enzyme type 1 subfamily.</text>
</comment>
<reference key="1">
    <citation type="journal article" date="2007" name="Environ. Microbiol.">
        <title>Whole-genome analysis of the ammonia-oxidizing bacterium, Nitrosomonas eutropha C91: implications for niche adaptation.</title>
        <authorList>
            <person name="Stein L.Y."/>
            <person name="Arp D.J."/>
            <person name="Berube P.M."/>
            <person name="Chain P.S."/>
            <person name="Hauser L."/>
            <person name="Jetten M.S."/>
            <person name="Klotz M.G."/>
            <person name="Larimer F.W."/>
            <person name="Norton J.M."/>
            <person name="Op den Camp H.J.M."/>
            <person name="Shin M."/>
            <person name="Wei X."/>
        </authorList>
    </citation>
    <scope>NUCLEOTIDE SEQUENCE [LARGE SCALE GENOMIC DNA]</scope>
    <source>
        <strain>DSM 101675 / C91 / Nm57</strain>
    </source>
</reference>
<evidence type="ECO:0000255" key="1">
    <source>
        <dbReference type="HAMAP-Rule" id="MF_01261"/>
    </source>
</evidence>
<name>CCA_NITEC</name>
<protein>
    <recommendedName>
        <fullName evidence="1">Multifunctional CCA protein</fullName>
    </recommendedName>
    <domain>
        <recommendedName>
            <fullName evidence="1">CCA-adding enzyme</fullName>
            <ecNumber evidence="1">2.7.7.72</ecNumber>
        </recommendedName>
        <alternativeName>
            <fullName evidence="1">CCA tRNA nucleotidyltransferase</fullName>
        </alternativeName>
        <alternativeName>
            <fullName evidence="1">tRNA CCA-pyrophosphorylase</fullName>
        </alternativeName>
        <alternativeName>
            <fullName evidence="1">tRNA adenylyl-/cytidylyl-transferase</fullName>
        </alternativeName>
        <alternativeName>
            <fullName evidence="1">tRNA nucleotidyltransferase</fullName>
        </alternativeName>
        <alternativeName>
            <fullName evidence="1">tRNA-NT</fullName>
        </alternativeName>
    </domain>
    <domain>
        <recommendedName>
            <fullName evidence="1">2'-nucleotidase</fullName>
            <ecNumber evidence="1">3.1.3.-</ecNumber>
        </recommendedName>
    </domain>
    <domain>
        <recommendedName>
            <fullName evidence="1">2',3'-cyclic phosphodiesterase</fullName>
            <ecNumber evidence="1">3.1.4.-</ecNumber>
        </recommendedName>
    </domain>
    <domain>
        <recommendedName>
            <fullName evidence="1">Phosphatase</fullName>
            <ecNumber evidence="1">3.1.3.-</ecNumber>
        </recommendedName>
    </domain>
</protein>
<dbReference type="EC" id="2.7.7.72" evidence="1"/>
<dbReference type="EC" id="3.1.3.-" evidence="1"/>
<dbReference type="EC" id="3.1.4.-" evidence="1"/>
<dbReference type="EMBL" id="CP000450">
    <property type="protein sequence ID" value="ABI58779.1"/>
    <property type="molecule type" value="Genomic_DNA"/>
</dbReference>
<dbReference type="RefSeq" id="WP_011633621.1">
    <property type="nucleotide sequence ID" value="NC_008344.1"/>
</dbReference>
<dbReference type="SMR" id="Q0AIP2"/>
<dbReference type="STRING" id="335283.Neut_0503"/>
<dbReference type="KEGG" id="net:Neut_0503"/>
<dbReference type="eggNOG" id="COG0617">
    <property type="taxonomic scope" value="Bacteria"/>
</dbReference>
<dbReference type="HOGENOM" id="CLU_015961_1_1_4"/>
<dbReference type="OrthoDB" id="9805698at2"/>
<dbReference type="Proteomes" id="UP000001966">
    <property type="component" value="Chromosome"/>
</dbReference>
<dbReference type="GO" id="GO:0005524">
    <property type="term" value="F:ATP binding"/>
    <property type="evidence" value="ECO:0007669"/>
    <property type="project" value="UniProtKB-UniRule"/>
</dbReference>
<dbReference type="GO" id="GO:0004810">
    <property type="term" value="F:CCA tRNA nucleotidyltransferase activity"/>
    <property type="evidence" value="ECO:0007669"/>
    <property type="project" value="UniProtKB-UniRule"/>
</dbReference>
<dbReference type="GO" id="GO:0004112">
    <property type="term" value="F:cyclic-nucleotide phosphodiesterase activity"/>
    <property type="evidence" value="ECO:0007669"/>
    <property type="project" value="UniProtKB-UniRule"/>
</dbReference>
<dbReference type="GO" id="GO:0000287">
    <property type="term" value="F:magnesium ion binding"/>
    <property type="evidence" value="ECO:0007669"/>
    <property type="project" value="UniProtKB-UniRule"/>
</dbReference>
<dbReference type="GO" id="GO:0016791">
    <property type="term" value="F:phosphatase activity"/>
    <property type="evidence" value="ECO:0007669"/>
    <property type="project" value="UniProtKB-UniRule"/>
</dbReference>
<dbReference type="GO" id="GO:0000049">
    <property type="term" value="F:tRNA binding"/>
    <property type="evidence" value="ECO:0007669"/>
    <property type="project" value="UniProtKB-UniRule"/>
</dbReference>
<dbReference type="GO" id="GO:0042245">
    <property type="term" value="P:RNA repair"/>
    <property type="evidence" value="ECO:0007669"/>
    <property type="project" value="UniProtKB-KW"/>
</dbReference>
<dbReference type="GO" id="GO:0001680">
    <property type="term" value="P:tRNA 3'-terminal CCA addition"/>
    <property type="evidence" value="ECO:0007669"/>
    <property type="project" value="UniProtKB-UniRule"/>
</dbReference>
<dbReference type="CDD" id="cd00077">
    <property type="entry name" value="HDc"/>
    <property type="match status" value="1"/>
</dbReference>
<dbReference type="CDD" id="cd05398">
    <property type="entry name" value="NT_ClassII-CCAase"/>
    <property type="match status" value="1"/>
</dbReference>
<dbReference type="Gene3D" id="3.30.460.10">
    <property type="entry name" value="Beta Polymerase, domain 2"/>
    <property type="match status" value="1"/>
</dbReference>
<dbReference type="Gene3D" id="1.10.3090.10">
    <property type="entry name" value="cca-adding enzyme, domain 2"/>
    <property type="match status" value="1"/>
</dbReference>
<dbReference type="HAMAP" id="MF_01261">
    <property type="entry name" value="CCA_bact_type1"/>
    <property type="match status" value="1"/>
</dbReference>
<dbReference type="HAMAP" id="MF_01262">
    <property type="entry name" value="CCA_bact_type2"/>
    <property type="match status" value="1"/>
</dbReference>
<dbReference type="InterPro" id="IPR012006">
    <property type="entry name" value="CCA_bact"/>
</dbReference>
<dbReference type="InterPro" id="IPR003607">
    <property type="entry name" value="HD/PDEase_dom"/>
</dbReference>
<dbReference type="InterPro" id="IPR006674">
    <property type="entry name" value="HD_domain"/>
</dbReference>
<dbReference type="InterPro" id="IPR043519">
    <property type="entry name" value="NT_sf"/>
</dbReference>
<dbReference type="InterPro" id="IPR002646">
    <property type="entry name" value="PolA_pol_head_dom"/>
</dbReference>
<dbReference type="InterPro" id="IPR032828">
    <property type="entry name" value="PolyA_RNA-bd"/>
</dbReference>
<dbReference type="InterPro" id="IPR050124">
    <property type="entry name" value="tRNA_CCA-adding_enzyme"/>
</dbReference>
<dbReference type="NCBIfam" id="NF008137">
    <property type="entry name" value="PRK10885.1"/>
    <property type="match status" value="1"/>
</dbReference>
<dbReference type="PANTHER" id="PTHR47545">
    <property type="entry name" value="MULTIFUNCTIONAL CCA PROTEIN"/>
    <property type="match status" value="1"/>
</dbReference>
<dbReference type="PANTHER" id="PTHR47545:SF1">
    <property type="entry name" value="MULTIFUNCTIONAL CCA PROTEIN"/>
    <property type="match status" value="1"/>
</dbReference>
<dbReference type="Pfam" id="PF01966">
    <property type="entry name" value="HD"/>
    <property type="match status" value="1"/>
</dbReference>
<dbReference type="Pfam" id="PF01743">
    <property type="entry name" value="PolyA_pol"/>
    <property type="match status" value="1"/>
</dbReference>
<dbReference type="Pfam" id="PF12627">
    <property type="entry name" value="PolyA_pol_RNAbd"/>
    <property type="match status" value="1"/>
</dbReference>
<dbReference type="PIRSF" id="PIRSF000813">
    <property type="entry name" value="CCA_bact"/>
    <property type="match status" value="1"/>
</dbReference>
<dbReference type="SUPFAM" id="SSF81301">
    <property type="entry name" value="Nucleotidyltransferase"/>
    <property type="match status" value="1"/>
</dbReference>
<dbReference type="SUPFAM" id="SSF81891">
    <property type="entry name" value="Poly A polymerase C-terminal region-like"/>
    <property type="match status" value="1"/>
</dbReference>
<dbReference type="PROSITE" id="PS51831">
    <property type="entry name" value="HD"/>
    <property type="match status" value="1"/>
</dbReference>
<proteinExistence type="inferred from homology"/>
<gene>
    <name evidence="1" type="primary">cca</name>
    <name type="ordered locus">Neut_0503</name>
</gene>
<sequence length="412" mass="45996">MKIYRVGGSVRDELLGLPVKDQDYVVVGATPEDMIRQGYRPVGKDFPVFLHPETHEQYALARTERKIARGYKGFAIYATPEVTLQEDLARRDLTINAIARDEAGNIIDPFGGIADLQAGILRHIGPAFVEDPVRVLRVARFAARFGFQVAPETFELMKEIVHTGETEALVAERVWQEIAHGLMEQHPSRMFHVLRECRALARILPEVDALFGVPQPAHAHPEIDTGIHVMMVIDYAASQQYPLEVRFAGLTHDLGKGTTPPDEWPRHIGHEARGVELVMDLCERIRVPRESRDLALLVARFHGDVHRALELRPSTIADMLQATDAYRKKVRFQAFLQACASDFHGRPGFADQPYPQAEHLSKALQAANSVDAGAIAMQLGQSHAGDTDLPMRIKRQVYAARVGRIKSLLSNP</sequence>
<feature type="chain" id="PRO_1000054275" description="Multifunctional CCA protein">
    <location>
        <begin position="1"/>
        <end position="412"/>
    </location>
</feature>
<feature type="domain" description="HD" evidence="1">
    <location>
        <begin position="225"/>
        <end position="326"/>
    </location>
</feature>
<feature type="binding site" evidence="1">
    <location>
        <position position="8"/>
    </location>
    <ligand>
        <name>ATP</name>
        <dbReference type="ChEBI" id="CHEBI:30616"/>
    </ligand>
</feature>
<feature type="binding site" evidence="1">
    <location>
        <position position="8"/>
    </location>
    <ligand>
        <name>CTP</name>
        <dbReference type="ChEBI" id="CHEBI:37563"/>
    </ligand>
</feature>
<feature type="binding site" evidence="1">
    <location>
        <position position="11"/>
    </location>
    <ligand>
        <name>ATP</name>
        <dbReference type="ChEBI" id="CHEBI:30616"/>
    </ligand>
</feature>
<feature type="binding site" evidence="1">
    <location>
        <position position="11"/>
    </location>
    <ligand>
        <name>CTP</name>
        <dbReference type="ChEBI" id="CHEBI:37563"/>
    </ligand>
</feature>
<feature type="binding site" evidence="1">
    <location>
        <position position="21"/>
    </location>
    <ligand>
        <name>Mg(2+)</name>
        <dbReference type="ChEBI" id="CHEBI:18420"/>
    </ligand>
</feature>
<feature type="binding site" evidence="1">
    <location>
        <position position="23"/>
    </location>
    <ligand>
        <name>Mg(2+)</name>
        <dbReference type="ChEBI" id="CHEBI:18420"/>
    </ligand>
</feature>
<feature type="binding site" evidence="1">
    <location>
        <position position="91"/>
    </location>
    <ligand>
        <name>ATP</name>
        <dbReference type="ChEBI" id="CHEBI:30616"/>
    </ligand>
</feature>
<feature type="binding site" evidence="1">
    <location>
        <position position="91"/>
    </location>
    <ligand>
        <name>CTP</name>
        <dbReference type="ChEBI" id="CHEBI:37563"/>
    </ligand>
</feature>
<feature type="binding site" evidence="1">
    <location>
        <position position="137"/>
    </location>
    <ligand>
        <name>ATP</name>
        <dbReference type="ChEBI" id="CHEBI:30616"/>
    </ligand>
</feature>
<feature type="binding site" evidence="1">
    <location>
        <position position="137"/>
    </location>
    <ligand>
        <name>CTP</name>
        <dbReference type="ChEBI" id="CHEBI:37563"/>
    </ligand>
</feature>
<feature type="binding site" evidence="1">
    <location>
        <position position="140"/>
    </location>
    <ligand>
        <name>ATP</name>
        <dbReference type="ChEBI" id="CHEBI:30616"/>
    </ligand>
</feature>
<feature type="binding site" evidence="1">
    <location>
        <position position="140"/>
    </location>
    <ligand>
        <name>CTP</name>
        <dbReference type="ChEBI" id="CHEBI:37563"/>
    </ligand>
</feature>